<reference key="1">
    <citation type="journal article" date="2008" name="Science">
        <title>Genome of an endosymbiont coupling N2 fixation to cellulolysis within RT protist cells in termite gut.</title>
        <authorList>
            <person name="Hongoh Y."/>
            <person name="Sharma V.K."/>
            <person name="Prakash T."/>
            <person name="Noda S."/>
            <person name="Toh H."/>
            <person name="Taylor T.D."/>
            <person name="Kudo T."/>
            <person name="Sakaki Y."/>
            <person name="Toyoda A."/>
            <person name="Hattori M."/>
            <person name="Ohkuma M."/>
        </authorList>
    </citation>
    <scope>NUCLEOTIDE SEQUENCE [LARGE SCALE GENOMIC DNA]</scope>
</reference>
<sequence length="124" mass="13270">MADLKAFAEQLVNLTIKEVSELTEILKTEYGIELATSSSVATGVSTSVVEVREEKTSFDLILKGVGTNKLAIVKLVKELTGLGLKEAKGIVDNAPAPLKEGITRNEAETLKKSLEEAGAEIDIR</sequence>
<name>RL7_AZOPC</name>
<keyword id="KW-1185">Reference proteome</keyword>
<keyword id="KW-0687">Ribonucleoprotein</keyword>
<keyword id="KW-0689">Ribosomal protein</keyword>
<comment type="function">
    <text evidence="1">Forms part of the ribosomal stalk which helps the ribosome interact with GTP-bound translation factors. Is thus essential for accurate translation.</text>
</comment>
<comment type="subunit">
    <text evidence="1">Homodimer. Part of the ribosomal stalk of the 50S ribosomal subunit. Forms a multimeric L10(L12)X complex, where L10 forms an elongated spine to which 2 to 4 L12 dimers bind in a sequential fashion. Binds GTP-bound translation factors.</text>
</comment>
<comment type="similarity">
    <text evidence="1">Belongs to the bacterial ribosomal protein bL12 family.</text>
</comment>
<evidence type="ECO:0000255" key="1">
    <source>
        <dbReference type="HAMAP-Rule" id="MF_00368"/>
    </source>
</evidence>
<evidence type="ECO:0000305" key="2"/>
<gene>
    <name evidence="1" type="primary">rplL</name>
    <name type="ordered locus">CFPG_007</name>
</gene>
<accession>B6YPZ8</accession>
<dbReference type="EMBL" id="AP010656">
    <property type="protein sequence ID" value="BAG83270.1"/>
    <property type="molecule type" value="Genomic_DNA"/>
</dbReference>
<dbReference type="RefSeq" id="WP_012573031.1">
    <property type="nucleotide sequence ID" value="NC_011565.1"/>
</dbReference>
<dbReference type="SMR" id="B6YPZ8"/>
<dbReference type="STRING" id="511995.CFPG_007"/>
<dbReference type="KEGG" id="aps:CFPG_007"/>
<dbReference type="eggNOG" id="COG0222">
    <property type="taxonomic scope" value="Bacteria"/>
</dbReference>
<dbReference type="HOGENOM" id="CLU_086499_3_1_10"/>
<dbReference type="OrthoDB" id="9811748at2"/>
<dbReference type="Proteomes" id="UP000000723">
    <property type="component" value="Chromosome"/>
</dbReference>
<dbReference type="GO" id="GO:0022625">
    <property type="term" value="C:cytosolic large ribosomal subunit"/>
    <property type="evidence" value="ECO:0007669"/>
    <property type="project" value="TreeGrafter"/>
</dbReference>
<dbReference type="GO" id="GO:0003729">
    <property type="term" value="F:mRNA binding"/>
    <property type="evidence" value="ECO:0007669"/>
    <property type="project" value="TreeGrafter"/>
</dbReference>
<dbReference type="GO" id="GO:0003735">
    <property type="term" value="F:structural constituent of ribosome"/>
    <property type="evidence" value="ECO:0007669"/>
    <property type="project" value="InterPro"/>
</dbReference>
<dbReference type="GO" id="GO:0006412">
    <property type="term" value="P:translation"/>
    <property type="evidence" value="ECO:0007669"/>
    <property type="project" value="UniProtKB-UniRule"/>
</dbReference>
<dbReference type="CDD" id="cd00387">
    <property type="entry name" value="Ribosomal_L7_L12"/>
    <property type="match status" value="1"/>
</dbReference>
<dbReference type="FunFam" id="3.30.1390.10:FF:000001">
    <property type="entry name" value="50S ribosomal protein L7/L12"/>
    <property type="match status" value="1"/>
</dbReference>
<dbReference type="Gene3D" id="3.30.1390.10">
    <property type="match status" value="1"/>
</dbReference>
<dbReference type="Gene3D" id="1.20.5.710">
    <property type="entry name" value="Single helix bin"/>
    <property type="match status" value="1"/>
</dbReference>
<dbReference type="HAMAP" id="MF_00368">
    <property type="entry name" value="Ribosomal_bL12"/>
    <property type="match status" value="1"/>
</dbReference>
<dbReference type="InterPro" id="IPR000206">
    <property type="entry name" value="Ribosomal_bL12"/>
</dbReference>
<dbReference type="InterPro" id="IPR013823">
    <property type="entry name" value="Ribosomal_bL12_C"/>
</dbReference>
<dbReference type="InterPro" id="IPR014719">
    <property type="entry name" value="Ribosomal_bL12_C/ClpS-like"/>
</dbReference>
<dbReference type="InterPro" id="IPR008932">
    <property type="entry name" value="Ribosomal_bL12_oligo"/>
</dbReference>
<dbReference type="InterPro" id="IPR036235">
    <property type="entry name" value="Ribosomal_bL12_oligo_N_sf"/>
</dbReference>
<dbReference type="NCBIfam" id="TIGR00855">
    <property type="entry name" value="L12"/>
    <property type="match status" value="1"/>
</dbReference>
<dbReference type="PANTHER" id="PTHR45987">
    <property type="entry name" value="39S RIBOSOMAL PROTEIN L12"/>
    <property type="match status" value="1"/>
</dbReference>
<dbReference type="PANTHER" id="PTHR45987:SF4">
    <property type="entry name" value="LARGE RIBOSOMAL SUBUNIT PROTEIN BL12M"/>
    <property type="match status" value="1"/>
</dbReference>
<dbReference type="Pfam" id="PF00542">
    <property type="entry name" value="Ribosomal_L12"/>
    <property type="match status" value="1"/>
</dbReference>
<dbReference type="Pfam" id="PF16320">
    <property type="entry name" value="Ribosomal_L12_N"/>
    <property type="match status" value="1"/>
</dbReference>
<dbReference type="SUPFAM" id="SSF54736">
    <property type="entry name" value="ClpS-like"/>
    <property type="match status" value="1"/>
</dbReference>
<dbReference type="SUPFAM" id="SSF48300">
    <property type="entry name" value="Ribosomal protein L7/12, oligomerisation (N-terminal) domain"/>
    <property type="match status" value="1"/>
</dbReference>
<proteinExistence type="inferred from homology"/>
<organism>
    <name type="scientific">Azobacteroides pseudotrichonymphae genomovar. CFP2</name>
    <dbReference type="NCBI Taxonomy" id="511995"/>
    <lineage>
        <taxon>Bacteria</taxon>
        <taxon>Pseudomonadati</taxon>
        <taxon>Bacteroidota</taxon>
        <taxon>Bacteroidia</taxon>
        <taxon>Bacteroidales</taxon>
        <taxon>Candidatus Azobacteroides</taxon>
    </lineage>
</organism>
<protein>
    <recommendedName>
        <fullName evidence="1">Large ribosomal subunit protein bL12</fullName>
    </recommendedName>
    <alternativeName>
        <fullName evidence="2">50S ribosomal protein L7/L12</fullName>
    </alternativeName>
</protein>
<feature type="chain" id="PRO_1000195766" description="Large ribosomal subunit protein bL12">
    <location>
        <begin position="1"/>
        <end position="124"/>
    </location>
</feature>